<sequence length="562" mass="63508">MPLKSFFFSAFLVLCLSKFTQGVGTTEKEESLSPLELNILQNKFASYYANDTITVKGITIGGWLVTEPYITPSLYRNATSLAKQQNSSSNISIVDEFTLCKTLGYNTSLTLLDNHFKTWITEDDFEQIKTNGFNLVRIPIGYWAWKQNTDKNLYIDNITFNDPYVSDGLQLKYLNNALEWAQKYELNVWLDLHGAPGSQNGFDNSGERILYGDLGWLRLNNTKELTLAIWRDMFQTFLNKGDKSPVVGIQIVNEPLGGKIDVSDITEMYYEAFDLLKKNQNSSDNTTFVIHDGFQGIGHWNLELNPTYQNVSHHYFNLTGANYSSQDILVDHHHYEVFTDAQLAETQFARIENIINYGDSIHKELSFHPAVVGEWSGAITDCATWLNGVGVGARYDGSYYNTTLFTTNDKPVGTCISQNSLADWTQDYRDRVRQFIEAQLATYSSKTTGWIFWNWKTEDAVEWDYLKLKEANLFPSPFDNYTYFKADGSIEEKFSSSLSAQAFPRTTSSVLSSTTTSRKSKNAAISNKLTTSQLLPIKNMSLTWKASVCALAITIAALCASL</sequence>
<reference key="1">
    <citation type="submission" date="1995-06" db="EMBL/GenBank/DDBJ databases">
        <title>EXG2, a gene coding for a exo-1,3-B-glucanase with a GPI anchor attachment site in the carboxy terminus.</title>
        <authorList>
            <person name="Correa J."/>
            <person name="Vazquez de Aldana C."/>
            <person name="San Segundo P."/>
            <person name="del Rey F."/>
        </authorList>
    </citation>
    <scope>NUCLEOTIDE SEQUENCE [GENOMIC DNA]</scope>
    <source>
        <strain>ATCC 204510 / AB320</strain>
    </source>
</reference>
<reference key="2">
    <citation type="journal article" date="1997" name="Nature">
        <title>The nucleotide sequence of Saccharomyces cerevisiae chromosome IV.</title>
        <authorList>
            <person name="Jacq C."/>
            <person name="Alt-Moerbe J."/>
            <person name="Andre B."/>
            <person name="Arnold W."/>
            <person name="Bahr A."/>
            <person name="Ballesta J.P.G."/>
            <person name="Bargues M."/>
            <person name="Baron L."/>
            <person name="Becker A."/>
            <person name="Biteau N."/>
            <person name="Bloecker H."/>
            <person name="Blugeon C."/>
            <person name="Boskovic J."/>
            <person name="Brandt P."/>
            <person name="Brueckner M."/>
            <person name="Buitrago M.J."/>
            <person name="Coster F."/>
            <person name="Delaveau T."/>
            <person name="del Rey F."/>
            <person name="Dujon B."/>
            <person name="Eide L.G."/>
            <person name="Garcia-Cantalejo J.M."/>
            <person name="Goffeau A."/>
            <person name="Gomez-Peris A."/>
            <person name="Granotier C."/>
            <person name="Hanemann V."/>
            <person name="Hankeln T."/>
            <person name="Hoheisel J.D."/>
            <person name="Jaeger W."/>
            <person name="Jimenez A."/>
            <person name="Jonniaux J.-L."/>
            <person name="Kraemer C."/>
            <person name="Kuester H."/>
            <person name="Laamanen P."/>
            <person name="Legros Y."/>
            <person name="Louis E.J."/>
            <person name="Moeller-Rieker S."/>
            <person name="Monnet A."/>
            <person name="Moro M."/>
            <person name="Mueller-Auer S."/>
            <person name="Nussbaumer B."/>
            <person name="Paricio N."/>
            <person name="Paulin L."/>
            <person name="Perea J."/>
            <person name="Perez-Alonso M."/>
            <person name="Perez-Ortin J.E."/>
            <person name="Pohl T.M."/>
            <person name="Prydz H."/>
            <person name="Purnelle B."/>
            <person name="Rasmussen S.W."/>
            <person name="Remacha M.A."/>
            <person name="Revuelta J.L."/>
            <person name="Rieger M."/>
            <person name="Salom D."/>
            <person name="Saluz H.P."/>
            <person name="Saiz J.E."/>
            <person name="Saren A.-M."/>
            <person name="Schaefer M."/>
            <person name="Scharfe M."/>
            <person name="Schmidt E.R."/>
            <person name="Schneider C."/>
            <person name="Scholler P."/>
            <person name="Schwarz S."/>
            <person name="Soler-Mira A."/>
            <person name="Urrestarazu L.A."/>
            <person name="Verhasselt P."/>
            <person name="Vissers S."/>
            <person name="Voet M."/>
            <person name="Volckaert G."/>
            <person name="Wagner G."/>
            <person name="Wambutt R."/>
            <person name="Wedler E."/>
            <person name="Wedler H."/>
            <person name="Woelfl S."/>
            <person name="Harris D.E."/>
            <person name="Bowman S."/>
            <person name="Brown D."/>
            <person name="Churcher C.M."/>
            <person name="Connor R."/>
            <person name="Dedman K."/>
            <person name="Gentles S."/>
            <person name="Hamlin N."/>
            <person name="Hunt S."/>
            <person name="Jones L."/>
            <person name="McDonald S."/>
            <person name="Murphy L.D."/>
            <person name="Niblett D."/>
            <person name="Odell C."/>
            <person name="Oliver K."/>
            <person name="Rajandream M.A."/>
            <person name="Richards C."/>
            <person name="Shore L."/>
            <person name="Walsh S.V."/>
            <person name="Barrell B.G."/>
            <person name="Dietrich F.S."/>
            <person name="Mulligan J.T."/>
            <person name="Allen E."/>
            <person name="Araujo R."/>
            <person name="Aviles E."/>
            <person name="Berno A."/>
            <person name="Carpenter J."/>
            <person name="Chen E."/>
            <person name="Cherry J.M."/>
            <person name="Chung E."/>
            <person name="Duncan M."/>
            <person name="Hunicke-Smith S."/>
            <person name="Hyman R.W."/>
            <person name="Komp C."/>
            <person name="Lashkari D."/>
            <person name="Lew H."/>
            <person name="Lin D."/>
            <person name="Mosedale D."/>
            <person name="Nakahara K."/>
            <person name="Namath A."/>
            <person name="Oefner P."/>
            <person name="Oh C."/>
            <person name="Petel F.X."/>
            <person name="Roberts D."/>
            <person name="Schramm S."/>
            <person name="Schroeder M."/>
            <person name="Shogren T."/>
            <person name="Shroff N."/>
            <person name="Winant A."/>
            <person name="Yelton M.A."/>
            <person name="Botstein D."/>
            <person name="Davis R.W."/>
            <person name="Johnston M."/>
            <person name="Andrews S."/>
            <person name="Brinkman R."/>
            <person name="Cooper J."/>
            <person name="Ding H."/>
            <person name="Du Z."/>
            <person name="Favello A."/>
            <person name="Fulton L."/>
            <person name="Gattung S."/>
            <person name="Greco T."/>
            <person name="Hallsworth K."/>
            <person name="Hawkins J."/>
            <person name="Hillier L.W."/>
            <person name="Jier M."/>
            <person name="Johnson D."/>
            <person name="Johnston L."/>
            <person name="Kirsten J."/>
            <person name="Kucaba T."/>
            <person name="Langston Y."/>
            <person name="Latreille P."/>
            <person name="Le T."/>
            <person name="Mardis E."/>
            <person name="Menezes S."/>
            <person name="Miller N."/>
            <person name="Nhan M."/>
            <person name="Pauley A."/>
            <person name="Peluso D."/>
            <person name="Rifkin L."/>
            <person name="Riles L."/>
            <person name="Taich A."/>
            <person name="Trevaskis E."/>
            <person name="Vignati D."/>
            <person name="Wilcox L."/>
            <person name="Wohldman P."/>
            <person name="Vaudin M."/>
            <person name="Wilson R."/>
            <person name="Waterston R."/>
            <person name="Albermann K."/>
            <person name="Hani J."/>
            <person name="Heumann K."/>
            <person name="Kleine K."/>
            <person name="Mewes H.-W."/>
            <person name="Zollner A."/>
            <person name="Zaccaria P."/>
        </authorList>
    </citation>
    <scope>NUCLEOTIDE SEQUENCE [LARGE SCALE GENOMIC DNA]</scope>
    <source>
        <strain>ATCC 204508 / S288c</strain>
    </source>
</reference>
<reference key="3">
    <citation type="journal article" date="2014" name="G3 (Bethesda)">
        <title>The reference genome sequence of Saccharomyces cerevisiae: Then and now.</title>
        <authorList>
            <person name="Engel S.R."/>
            <person name="Dietrich F.S."/>
            <person name="Fisk D.G."/>
            <person name="Binkley G."/>
            <person name="Balakrishnan R."/>
            <person name="Costanzo M.C."/>
            <person name="Dwight S.S."/>
            <person name="Hitz B.C."/>
            <person name="Karra K."/>
            <person name="Nash R.S."/>
            <person name="Weng S."/>
            <person name="Wong E.D."/>
            <person name="Lloyd P."/>
            <person name="Skrzypek M.S."/>
            <person name="Miyasato S.R."/>
            <person name="Simison M."/>
            <person name="Cherry J.M."/>
        </authorList>
    </citation>
    <scope>GENOME REANNOTATION</scope>
    <source>
        <strain>ATCC 204508 / S288c</strain>
    </source>
</reference>
<reference key="4">
    <citation type="journal article" date="2003" name="Nature">
        <title>Global analysis of protein expression in yeast.</title>
        <authorList>
            <person name="Ghaemmaghami S."/>
            <person name="Huh W.-K."/>
            <person name="Bower K."/>
            <person name="Howson R.W."/>
            <person name="Belle A."/>
            <person name="Dephoure N."/>
            <person name="O'Shea E.K."/>
            <person name="Weissman J.S."/>
        </authorList>
    </citation>
    <scope>LEVEL OF PROTEIN EXPRESSION [LARGE SCALE ANALYSIS]</scope>
</reference>
<accession>P52911</accession>
<accession>D6VSP1</accession>
<protein>
    <recommendedName>
        <fullName>Glucan 1,3-beta-glucosidase 2</fullName>
        <ecNumber>3.2.1.58</ecNumber>
    </recommendedName>
    <alternativeName>
        <fullName>Exo-1,3-beta-glucanase 2</fullName>
    </alternativeName>
</protein>
<keyword id="KW-1003">Cell membrane</keyword>
<keyword id="KW-0961">Cell wall biogenesis/degradation</keyword>
<keyword id="KW-0325">Glycoprotein</keyword>
<keyword id="KW-0326">Glycosidase</keyword>
<keyword id="KW-0336">GPI-anchor</keyword>
<keyword id="KW-0378">Hydrolase</keyword>
<keyword id="KW-0449">Lipoprotein</keyword>
<keyword id="KW-0472">Membrane</keyword>
<keyword id="KW-1185">Reference proteome</keyword>
<keyword id="KW-0732">Signal</keyword>
<name>EXG2_YEAST</name>
<proteinExistence type="evidence at protein level"/>
<gene>
    <name type="primary">EXG2</name>
    <name type="ordered locus">YDR261C</name>
    <name type="ORF">YD9320A.12C</name>
</gene>
<evidence type="ECO:0000250" key="1"/>
<evidence type="ECO:0000255" key="2"/>
<evidence type="ECO:0000269" key="3">
    <source>
    </source>
</evidence>
<evidence type="ECO:0000305" key="4"/>
<feature type="signal peptide" evidence="2">
    <location>
        <begin position="1"/>
        <end position="22"/>
    </location>
</feature>
<feature type="chain" id="PRO_0000007894" description="Glucan 1,3-beta-glucosidase 2">
    <location>
        <begin position="23"/>
        <end position="562"/>
    </location>
</feature>
<feature type="active site" description="Proton donor" evidence="1">
    <location>
        <position position="254"/>
    </location>
</feature>
<feature type="active site" description="Nucleophile" evidence="1">
    <location>
        <position position="334"/>
    </location>
</feature>
<feature type="glycosylation site" description="N-linked (GlcNAc...) asparagine" evidence="2">
    <location>
        <position position="50"/>
    </location>
</feature>
<feature type="glycosylation site" description="N-linked (GlcNAc...) asparagine" evidence="2">
    <location>
        <position position="77"/>
    </location>
</feature>
<feature type="glycosylation site" description="N-linked (GlcNAc...) asparagine" evidence="2">
    <location>
        <position position="86"/>
    </location>
</feature>
<feature type="glycosylation site" description="N-linked (GlcNAc...) asparagine" evidence="2">
    <location>
        <position position="90"/>
    </location>
</feature>
<feature type="glycosylation site" description="N-linked (GlcNAc...) asparagine" evidence="2">
    <location>
        <position position="106"/>
    </location>
</feature>
<feature type="glycosylation site" description="N-linked (GlcNAc...) asparagine" evidence="2">
    <location>
        <position position="157"/>
    </location>
</feature>
<feature type="glycosylation site" description="N-linked (GlcNAc...) asparagine" evidence="2">
    <location>
        <position position="220"/>
    </location>
</feature>
<feature type="glycosylation site" description="N-linked (GlcNAc...) asparagine" evidence="2">
    <location>
        <position position="281"/>
    </location>
</feature>
<feature type="glycosylation site" description="N-linked (GlcNAc...) asparagine" evidence="2">
    <location>
        <position position="285"/>
    </location>
</feature>
<feature type="glycosylation site" description="N-linked (GlcNAc...) asparagine" evidence="2">
    <location>
        <position position="310"/>
    </location>
</feature>
<feature type="glycosylation site" description="N-linked (GlcNAc...) asparagine" evidence="2">
    <location>
        <position position="317"/>
    </location>
</feature>
<feature type="glycosylation site" description="N-linked (GlcNAc...) asparagine" evidence="2">
    <location>
        <position position="322"/>
    </location>
</feature>
<feature type="glycosylation site" description="N-linked (GlcNAc...) asparagine" evidence="2">
    <location>
        <position position="401"/>
    </location>
</feature>
<feature type="glycosylation site" description="N-linked (GlcNAc...) asparagine" evidence="2">
    <location>
        <position position="480"/>
    </location>
</feature>
<feature type="glycosylation site" description="N-linked (GlcNAc...) asparagine" evidence="2">
    <location>
        <position position="539"/>
    </location>
</feature>
<dbReference type="EC" id="3.2.1.58"/>
<dbReference type="EMBL" id="Z46870">
    <property type="protein sequence ID" value="CAA86950.1"/>
    <property type="molecule type" value="Genomic_DNA"/>
</dbReference>
<dbReference type="EMBL" id="Z70202">
    <property type="protein sequence ID" value="CAA94100.1"/>
    <property type="molecule type" value="Genomic_DNA"/>
</dbReference>
<dbReference type="EMBL" id="Z68329">
    <property type="protein sequence ID" value="CAA92719.1"/>
    <property type="molecule type" value="Genomic_DNA"/>
</dbReference>
<dbReference type="EMBL" id="BK006938">
    <property type="protein sequence ID" value="DAA12101.1"/>
    <property type="molecule type" value="Genomic_DNA"/>
</dbReference>
<dbReference type="PIR" id="S55516">
    <property type="entry name" value="S55516"/>
</dbReference>
<dbReference type="RefSeq" id="NP_010547.1">
    <property type="nucleotide sequence ID" value="NM_001180569.1"/>
</dbReference>
<dbReference type="SMR" id="P52911"/>
<dbReference type="BioGRID" id="32311">
    <property type="interactions" value="64"/>
</dbReference>
<dbReference type="FunCoup" id="P52911">
    <property type="interactions" value="87"/>
</dbReference>
<dbReference type="IntAct" id="P52911">
    <property type="interactions" value="9"/>
</dbReference>
<dbReference type="STRING" id="4932.YDR261C"/>
<dbReference type="CAZy" id="GH5">
    <property type="family name" value="Glycoside Hydrolase Family 5"/>
</dbReference>
<dbReference type="GlyCosmos" id="P52911">
    <property type="glycosylation" value="15 sites, No reported glycans"/>
</dbReference>
<dbReference type="GlyGen" id="P52911">
    <property type="glycosylation" value="15 sites"/>
</dbReference>
<dbReference type="PaxDb" id="4932-YDR261C"/>
<dbReference type="PeptideAtlas" id="P52911"/>
<dbReference type="EnsemblFungi" id="YDR261C_mRNA">
    <property type="protein sequence ID" value="YDR261C"/>
    <property type="gene ID" value="YDR261C"/>
</dbReference>
<dbReference type="GeneID" id="851848"/>
<dbReference type="KEGG" id="sce:YDR261C"/>
<dbReference type="AGR" id="SGD:S000002669"/>
<dbReference type="SGD" id="S000002669">
    <property type="gene designation" value="EXG2"/>
</dbReference>
<dbReference type="VEuPathDB" id="FungiDB:YDR261C"/>
<dbReference type="eggNOG" id="ENOG502QW42">
    <property type="taxonomic scope" value="Eukaryota"/>
</dbReference>
<dbReference type="GeneTree" id="ENSGT00940000176313"/>
<dbReference type="HOGENOM" id="CLU_004624_0_0_1"/>
<dbReference type="InParanoid" id="P52911"/>
<dbReference type="OMA" id="KSINYEH"/>
<dbReference type="OrthoDB" id="62120at2759"/>
<dbReference type="BioCyc" id="YEAST:YDR261C-MONOMER"/>
<dbReference type="BioGRID-ORCS" id="851848">
    <property type="hits" value="0 hits in 10 CRISPR screens"/>
</dbReference>
<dbReference type="PRO" id="PR:P52911"/>
<dbReference type="Proteomes" id="UP000002311">
    <property type="component" value="Chromosome IV"/>
</dbReference>
<dbReference type="RNAct" id="P52911">
    <property type="molecule type" value="protein"/>
</dbReference>
<dbReference type="GO" id="GO:0005576">
    <property type="term" value="C:extracellular region"/>
    <property type="evidence" value="ECO:0000318"/>
    <property type="project" value="GO_Central"/>
</dbReference>
<dbReference type="GO" id="GO:0009277">
    <property type="term" value="C:fungal-type cell wall"/>
    <property type="evidence" value="ECO:0000314"/>
    <property type="project" value="SGD"/>
</dbReference>
<dbReference type="GO" id="GO:0005886">
    <property type="term" value="C:plasma membrane"/>
    <property type="evidence" value="ECO:0007669"/>
    <property type="project" value="UniProtKB-SubCell"/>
</dbReference>
<dbReference type="GO" id="GO:0098552">
    <property type="term" value="C:side of membrane"/>
    <property type="evidence" value="ECO:0007669"/>
    <property type="project" value="UniProtKB-KW"/>
</dbReference>
<dbReference type="GO" id="GO:0004338">
    <property type="term" value="F:glucan exo-1,3-beta-glucosidase activity"/>
    <property type="evidence" value="ECO:0000314"/>
    <property type="project" value="SGD"/>
</dbReference>
<dbReference type="GO" id="GO:0031505">
    <property type="term" value="P:fungal-type cell wall organization"/>
    <property type="evidence" value="ECO:0000305"/>
    <property type="project" value="SGD"/>
</dbReference>
<dbReference type="GO" id="GO:0009251">
    <property type="term" value="P:glucan catabolic process"/>
    <property type="evidence" value="ECO:0000318"/>
    <property type="project" value="GO_Central"/>
</dbReference>
<dbReference type="FunFam" id="3.20.20.80:FF:000212">
    <property type="entry name" value="Exo-1,3-beta-glucanase"/>
    <property type="match status" value="1"/>
</dbReference>
<dbReference type="Gene3D" id="3.20.20.80">
    <property type="entry name" value="Glycosidases"/>
    <property type="match status" value="1"/>
</dbReference>
<dbReference type="InterPro" id="IPR001547">
    <property type="entry name" value="Glyco_hydro_5"/>
</dbReference>
<dbReference type="InterPro" id="IPR018087">
    <property type="entry name" value="Glyco_hydro_5_CS"/>
</dbReference>
<dbReference type="InterPro" id="IPR017853">
    <property type="entry name" value="Glycoside_hydrolase_SF"/>
</dbReference>
<dbReference type="InterPro" id="IPR050386">
    <property type="entry name" value="Glycosyl_hydrolase_5"/>
</dbReference>
<dbReference type="PANTHER" id="PTHR31297:SF9">
    <property type="entry name" value="GLUCAN 1,3-BETA-GLUCOSIDASE 2"/>
    <property type="match status" value="1"/>
</dbReference>
<dbReference type="PANTHER" id="PTHR31297">
    <property type="entry name" value="GLUCAN ENDO-1,6-BETA-GLUCOSIDASE B"/>
    <property type="match status" value="1"/>
</dbReference>
<dbReference type="Pfam" id="PF00150">
    <property type="entry name" value="Cellulase"/>
    <property type="match status" value="1"/>
</dbReference>
<dbReference type="SUPFAM" id="SSF51445">
    <property type="entry name" value="(Trans)glycosidases"/>
    <property type="match status" value="1"/>
</dbReference>
<dbReference type="PROSITE" id="PS00659">
    <property type="entry name" value="GLYCOSYL_HYDROL_F5"/>
    <property type="match status" value="1"/>
</dbReference>
<organism>
    <name type="scientific">Saccharomyces cerevisiae (strain ATCC 204508 / S288c)</name>
    <name type="common">Baker's yeast</name>
    <dbReference type="NCBI Taxonomy" id="559292"/>
    <lineage>
        <taxon>Eukaryota</taxon>
        <taxon>Fungi</taxon>
        <taxon>Dikarya</taxon>
        <taxon>Ascomycota</taxon>
        <taxon>Saccharomycotina</taxon>
        <taxon>Saccharomycetes</taxon>
        <taxon>Saccharomycetales</taxon>
        <taxon>Saccharomycetaceae</taxon>
        <taxon>Saccharomyces</taxon>
    </lineage>
</organism>
<comment type="catalytic activity">
    <reaction>
        <text>Successive hydrolysis of beta-D-glucose units from the non-reducing ends of (1-&gt;3)-beta-D-glucans, releasing alpha-glucose.</text>
        <dbReference type="EC" id="3.2.1.58"/>
    </reaction>
</comment>
<comment type="subcellular location">
    <subcellularLocation>
        <location evidence="4">Cell membrane</location>
        <topology evidence="4">Lipid-anchor</topology>
        <topology evidence="4">GPI-anchor</topology>
    </subcellularLocation>
</comment>
<comment type="miscellaneous">
    <text evidence="3">Present with 2410 molecules/cell in log phase SD medium.</text>
</comment>
<comment type="similarity">
    <text evidence="4">Belongs to the glycosyl hydrolase 5 (cellulase A) family.</text>
</comment>